<accession>A1KNR3</accession>
<name>FBIA_MYCBP</name>
<gene>
    <name evidence="1" type="primary">fbiA</name>
    <name type="ordered locus">BCG_3290</name>
</gene>
<proteinExistence type="inferred from homology"/>
<dbReference type="EC" id="2.7.8.28" evidence="1"/>
<dbReference type="EMBL" id="AM408590">
    <property type="protein sequence ID" value="CAL73279.1"/>
    <property type="molecule type" value="Genomic_DNA"/>
</dbReference>
<dbReference type="SMR" id="A1KNR3"/>
<dbReference type="KEGG" id="mbb:BCG_3290"/>
<dbReference type="HOGENOM" id="CLU_055795_0_0_11"/>
<dbReference type="UniPathway" id="UPA00071"/>
<dbReference type="Proteomes" id="UP000001472">
    <property type="component" value="Chromosome"/>
</dbReference>
<dbReference type="GO" id="GO:0043743">
    <property type="term" value="F:LPPG:FO 2-phospho-L-lactate transferase activity"/>
    <property type="evidence" value="ECO:0007669"/>
    <property type="project" value="UniProtKB-EC"/>
</dbReference>
<dbReference type="GO" id="GO:0000287">
    <property type="term" value="F:magnesium ion binding"/>
    <property type="evidence" value="ECO:0007669"/>
    <property type="project" value="InterPro"/>
</dbReference>
<dbReference type="GO" id="GO:0052645">
    <property type="term" value="P:F420-0 metabolic process"/>
    <property type="evidence" value="ECO:0007669"/>
    <property type="project" value="UniProtKB-UniRule"/>
</dbReference>
<dbReference type="CDD" id="cd07186">
    <property type="entry name" value="CofD_like"/>
    <property type="match status" value="1"/>
</dbReference>
<dbReference type="FunFam" id="1.10.8.240:FF:000001">
    <property type="entry name" value="2-phospho-L-lactate transferase"/>
    <property type="match status" value="1"/>
</dbReference>
<dbReference type="FunFam" id="3.40.50.10680:FF:000001">
    <property type="entry name" value="2-phospho-L-lactate transferase"/>
    <property type="match status" value="1"/>
</dbReference>
<dbReference type="Gene3D" id="1.10.8.240">
    <property type="entry name" value="CofD-like domain"/>
    <property type="match status" value="1"/>
</dbReference>
<dbReference type="Gene3D" id="3.40.50.10680">
    <property type="entry name" value="CofD-like domains"/>
    <property type="match status" value="1"/>
</dbReference>
<dbReference type="HAMAP" id="MF_01257">
    <property type="entry name" value="CofD"/>
    <property type="match status" value="1"/>
</dbReference>
<dbReference type="InterPro" id="IPR002882">
    <property type="entry name" value="CofD"/>
</dbReference>
<dbReference type="InterPro" id="IPR038136">
    <property type="entry name" value="CofD-like_dom_sf"/>
</dbReference>
<dbReference type="InterPro" id="IPR010115">
    <property type="entry name" value="FbiA/CofD"/>
</dbReference>
<dbReference type="NCBIfam" id="TIGR01819">
    <property type="entry name" value="F420_cofD"/>
    <property type="match status" value="1"/>
</dbReference>
<dbReference type="PANTHER" id="PTHR43007">
    <property type="entry name" value="2-PHOSPHO-L-LACTATE TRANSFERASE"/>
    <property type="match status" value="1"/>
</dbReference>
<dbReference type="PANTHER" id="PTHR43007:SF1">
    <property type="entry name" value="2-PHOSPHO-L-LACTATE TRANSFERASE"/>
    <property type="match status" value="1"/>
</dbReference>
<dbReference type="Pfam" id="PF01933">
    <property type="entry name" value="CofD"/>
    <property type="match status" value="1"/>
</dbReference>
<dbReference type="SUPFAM" id="SSF142338">
    <property type="entry name" value="CofD-like"/>
    <property type="match status" value="1"/>
</dbReference>
<keyword id="KW-0460">Magnesium</keyword>
<keyword id="KW-0808">Transferase</keyword>
<feature type="chain" id="PRO_1000067250" description="Phosphoenolpyruvate transferase">
    <location>
        <begin position="1"/>
        <end position="331"/>
    </location>
</feature>
<feature type="binding site" evidence="1">
    <location>
        <position position="63"/>
    </location>
    <ligand>
        <name>7,8-didemethyl-8-hydroxy-5-deazariboflavin</name>
        <dbReference type="ChEBI" id="CHEBI:59904"/>
    </ligand>
</feature>
<sequence>MKVTVLAGGVGGARFLLGVQQLLGLGQFAANSAHSDADHQLSAVVNVGDDAWIHGLRVCPDLDTCMYTLGGGVDPQRGWGQRDETWHAMQELVRYGVQPDWFELGDRDLATHLVRTQMLQAGYPLSQITEALCDRWQPGARLLPATDDRCETHVVITDPVDESRKAIHFQEWWVRYRAQVPTHSFAFVGAEKSSAATEAIAALADADIIMLAPSNPVVSIGAILAVPGIRAALREATAPIVGYSPIIGEKPLRGMADTCLSVIGVDSTAAAVGRHYGARCATGILDCWLVHDGDHAEIDGVTVRSVPLLMTDPNATAEMVRAGCDLAGVVA</sequence>
<reference key="1">
    <citation type="journal article" date="2007" name="Proc. Natl. Acad. Sci. U.S.A.">
        <title>Genome plasticity of BCG and impact on vaccine efficacy.</title>
        <authorList>
            <person name="Brosch R."/>
            <person name="Gordon S.V."/>
            <person name="Garnier T."/>
            <person name="Eiglmeier K."/>
            <person name="Frigui W."/>
            <person name="Valenti P."/>
            <person name="Dos Santos S."/>
            <person name="Duthoy S."/>
            <person name="Lacroix C."/>
            <person name="Garcia-Pelayo C."/>
            <person name="Inwald J.K."/>
            <person name="Golby P."/>
            <person name="Garcia J.N."/>
            <person name="Hewinson R.G."/>
            <person name="Behr M.A."/>
            <person name="Quail M.A."/>
            <person name="Churcher C."/>
            <person name="Barrell B.G."/>
            <person name="Parkhill J."/>
            <person name="Cole S.T."/>
        </authorList>
    </citation>
    <scope>NUCLEOTIDE SEQUENCE [LARGE SCALE GENOMIC DNA]</scope>
    <source>
        <strain>BCG / Pasteur 1173P2</strain>
    </source>
</reference>
<evidence type="ECO:0000255" key="1">
    <source>
        <dbReference type="HAMAP-Rule" id="MF_01257"/>
    </source>
</evidence>
<protein>
    <recommendedName>
        <fullName evidence="1">Phosphoenolpyruvate transferase</fullName>
        <ecNumber evidence="1">2.7.8.28</ecNumber>
    </recommendedName>
    <alternativeName>
        <fullName evidence="1">EPPG:FO PEP transferase</fullName>
    </alternativeName>
</protein>
<organism>
    <name type="scientific">Mycobacterium bovis (strain BCG / Pasteur 1173P2)</name>
    <dbReference type="NCBI Taxonomy" id="410289"/>
    <lineage>
        <taxon>Bacteria</taxon>
        <taxon>Bacillati</taxon>
        <taxon>Actinomycetota</taxon>
        <taxon>Actinomycetes</taxon>
        <taxon>Mycobacteriales</taxon>
        <taxon>Mycobacteriaceae</taxon>
        <taxon>Mycobacterium</taxon>
        <taxon>Mycobacterium tuberculosis complex</taxon>
    </lineage>
</organism>
<comment type="function">
    <text evidence="1">Catalyzes the transfer of the phosphoenolpyruvate moiety from enoylpyruvoyl-2-diphospho-5'-guanosine (EPPG) to 7,8-didemethyl-8-hydroxy-5-deazariboflavin (FO) with the formation of dehydro coenzyme F420-0 and GMP.</text>
</comment>
<comment type="catalytic activity">
    <reaction evidence="1">
        <text>enolpyruvoyl-2-diphospho-5'-guanosine + 7,8-didemethyl-8-hydroxy-5-deazariboflavin = dehydro coenzyme F420-0 + GMP + H(+)</text>
        <dbReference type="Rhea" id="RHEA:27510"/>
        <dbReference type="ChEBI" id="CHEBI:15378"/>
        <dbReference type="ChEBI" id="CHEBI:58115"/>
        <dbReference type="ChEBI" id="CHEBI:59904"/>
        <dbReference type="ChEBI" id="CHEBI:143701"/>
        <dbReference type="ChEBI" id="CHEBI:143705"/>
        <dbReference type="EC" id="2.7.8.28"/>
    </reaction>
</comment>
<comment type="cofactor">
    <cofactor evidence="1">
        <name>Mg(2+)</name>
        <dbReference type="ChEBI" id="CHEBI:18420"/>
    </cofactor>
</comment>
<comment type="pathway">
    <text evidence="1">Cofactor biosynthesis; coenzyme F420 biosynthesis.</text>
</comment>
<comment type="subunit">
    <text evidence="1">Homodimer.</text>
</comment>
<comment type="similarity">
    <text evidence="1">Belongs to the CofD family.</text>
</comment>